<proteinExistence type="evidence at protein level"/>
<dbReference type="EMBL" id="AK011290">
    <property type="protein sequence ID" value="BAB27520.1"/>
    <property type="molecule type" value="mRNA"/>
</dbReference>
<dbReference type="EMBL" id="BC029621">
    <property type="protein sequence ID" value="AAH29621.1"/>
    <property type="molecule type" value="mRNA"/>
</dbReference>
<dbReference type="RefSeq" id="NP_080640.1">
    <property type="nucleotide sequence ID" value="NM_026364.1"/>
</dbReference>
<dbReference type="SMR" id="Q9D0M1"/>
<dbReference type="BioGRID" id="212425">
    <property type="interactions" value="9"/>
</dbReference>
<dbReference type="DIP" id="DIP-59971N"/>
<dbReference type="FunCoup" id="Q9D0M1">
    <property type="interactions" value="294"/>
</dbReference>
<dbReference type="IntAct" id="Q9D0M1">
    <property type="interactions" value="1"/>
</dbReference>
<dbReference type="STRING" id="10090.ENSMUSP00000101999"/>
<dbReference type="GlyGen" id="Q9D0M1">
    <property type="glycosylation" value="3 sites, 2 N-linked glycans (2 sites), 1 O-linked glycan (1 site)"/>
</dbReference>
<dbReference type="iPTMnet" id="Q9D0M1"/>
<dbReference type="PhosphoSitePlus" id="Q9D0M1"/>
<dbReference type="SwissPalm" id="Q9D0M1"/>
<dbReference type="jPOST" id="Q9D0M1"/>
<dbReference type="PaxDb" id="10090-ENSMUSP00000101999"/>
<dbReference type="PeptideAtlas" id="Q9D0M1"/>
<dbReference type="ProteomicsDB" id="263561"/>
<dbReference type="Pumba" id="Q9D0M1"/>
<dbReference type="DNASU" id="67763"/>
<dbReference type="GeneID" id="67763"/>
<dbReference type="KEGG" id="mmu:67763"/>
<dbReference type="AGR" id="MGI:1915013"/>
<dbReference type="CTD" id="5635"/>
<dbReference type="MGI" id="MGI:1915013">
    <property type="gene designation" value="Prpsap1"/>
</dbReference>
<dbReference type="eggNOG" id="KOG1503">
    <property type="taxonomic scope" value="Eukaryota"/>
</dbReference>
<dbReference type="InParanoid" id="Q9D0M1"/>
<dbReference type="OrthoDB" id="413572at2759"/>
<dbReference type="BioGRID-ORCS" id="67763">
    <property type="hits" value="4 hits in 81 CRISPR screens"/>
</dbReference>
<dbReference type="ChiTaRS" id="Prpsap1">
    <property type="organism name" value="mouse"/>
</dbReference>
<dbReference type="PRO" id="PR:Q9D0M1"/>
<dbReference type="Proteomes" id="UP000000589">
    <property type="component" value="Unplaced"/>
</dbReference>
<dbReference type="RNAct" id="Q9D0M1">
    <property type="molecule type" value="protein"/>
</dbReference>
<dbReference type="GO" id="GO:0000287">
    <property type="term" value="F:magnesium ion binding"/>
    <property type="evidence" value="ECO:0007669"/>
    <property type="project" value="InterPro"/>
</dbReference>
<dbReference type="GO" id="GO:0009165">
    <property type="term" value="P:nucleotide biosynthetic process"/>
    <property type="evidence" value="ECO:0007669"/>
    <property type="project" value="UniProtKB-KW"/>
</dbReference>
<dbReference type="CDD" id="cd06223">
    <property type="entry name" value="PRTases_typeI"/>
    <property type="match status" value="1"/>
</dbReference>
<dbReference type="FunFam" id="3.40.50.2020:FF:000012">
    <property type="entry name" value="Phosphoribosyl pyrophosphate synthase-associated protein 2 isoform 1"/>
    <property type="match status" value="1"/>
</dbReference>
<dbReference type="FunFam" id="3.40.50.2020:FF:000014">
    <property type="entry name" value="Ribose-phosphate pyrophosphokinase 1"/>
    <property type="match status" value="1"/>
</dbReference>
<dbReference type="Gene3D" id="3.40.50.2020">
    <property type="match status" value="2"/>
</dbReference>
<dbReference type="InterPro" id="IPR029099">
    <property type="entry name" value="Pribosyltran_N"/>
</dbReference>
<dbReference type="InterPro" id="IPR000836">
    <property type="entry name" value="PRibTrfase_dom"/>
</dbReference>
<dbReference type="InterPro" id="IPR029057">
    <property type="entry name" value="PRTase-like"/>
</dbReference>
<dbReference type="InterPro" id="IPR005946">
    <property type="entry name" value="Rib-P_diPkinase"/>
</dbReference>
<dbReference type="NCBIfam" id="TIGR01251">
    <property type="entry name" value="ribP_PPkin"/>
    <property type="match status" value="1"/>
</dbReference>
<dbReference type="PANTHER" id="PTHR10210:SF28">
    <property type="entry name" value="PHOSPHORIBOSYL PYROPHOSPHATE SYNTHASE-ASSOCIATED PROTEIN 1"/>
    <property type="match status" value="1"/>
</dbReference>
<dbReference type="PANTHER" id="PTHR10210">
    <property type="entry name" value="RIBOSE-PHOSPHATE DIPHOSPHOKINASE FAMILY MEMBER"/>
    <property type="match status" value="1"/>
</dbReference>
<dbReference type="Pfam" id="PF14572">
    <property type="entry name" value="Pribosyl_synth"/>
    <property type="match status" value="1"/>
</dbReference>
<dbReference type="Pfam" id="PF13793">
    <property type="entry name" value="Pribosyltran_N"/>
    <property type="match status" value="1"/>
</dbReference>
<dbReference type="SMART" id="SM01400">
    <property type="entry name" value="Pribosyltran_N"/>
    <property type="match status" value="1"/>
</dbReference>
<dbReference type="SUPFAM" id="SSF53271">
    <property type="entry name" value="PRTase-like"/>
    <property type="match status" value="2"/>
</dbReference>
<comment type="function">
    <text evidence="1">Seems to play a negative regulatory role in 5-phosphoribose 1-diphosphate synthesis.</text>
</comment>
<comment type="subunit">
    <text evidence="1">Binds to PRPS1 and PRPS2.</text>
</comment>
<comment type="similarity">
    <text evidence="3">Belongs to the ribose-phosphate pyrophosphokinase family.</text>
</comment>
<feature type="chain" id="PRO_0000141080" description="Phosphoribosyl pyrophosphate synthase-associated protein 1">
    <location>
        <begin position="1"/>
        <end position="356"/>
    </location>
</feature>
<feature type="modified residue" description="N-acetylmethionine" evidence="2">
    <location>
        <position position="1"/>
    </location>
</feature>
<feature type="modified residue" description="Phosphoserine" evidence="2">
    <location>
        <position position="177"/>
    </location>
</feature>
<feature type="modified residue" description="Phosphoserine" evidence="4">
    <location>
        <position position="215"/>
    </location>
</feature>
<accession>Q9D0M1</accession>
<name>KPRA_MOUSE</name>
<reference key="1">
    <citation type="journal article" date="2005" name="Science">
        <title>The transcriptional landscape of the mammalian genome.</title>
        <authorList>
            <person name="Carninci P."/>
            <person name="Kasukawa T."/>
            <person name="Katayama S."/>
            <person name="Gough J."/>
            <person name="Frith M.C."/>
            <person name="Maeda N."/>
            <person name="Oyama R."/>
            <person name="Ravasi T."/>
            <person name="Lenhard B."/>
            <person name="Wells C."/>
            <person name="Kodzius R."/>
            <person name="Shimokawa K."/>
            <person name="Bajic V.B."/>
            <person name="Brenner S.E."/>
            <person name="Batalov S."/>
            <person name="Forrest A.R."/>
            <person name="Zavolan M."/>
            <person name="Davis M.J."/>
            <person name="Wilming L.G."/>
            <person name="Aidinis V."/>
            <person name="Allen J.E."/>
            <person name="Ambesi-Impiombato A."/>
            <person name="Apweiler R."/>
            <person name="Aturaliya R.N."/>
            <person name="Bailey T.L."/>
            <person name="Bansal M."/>
            <person name="Baxter L."/>
            <person name="Beisel K.W."/>
            <person name="Bersano T."/>
            <person name="Bono H."/>
            <person name="Chalk A.M."/>
            <person name="Chiu K.P."/>
            <person name="Choudhary V."/>
            <person name="Christoffels A."/>
            <person name="Clutterbuck D.R."/>
            <person name="Crowe M.L."/>
            <person name="Dalla E."/>
            <person name="Dalrymple B.P."/>
            <person name="de Bono B."/>
            <person name="Della Gatta G."/>
            <person name="di Bernardo D."/>
            <person name="Down T."/>
            <person name="Engstrom P."/>
            <person name="Fagiolini M."/>
            <person name="Faulkner G."/>
            <person name="Fletcher C.F."/>
            <person name="Fukushima T."/>
            <person name="Furuno M."/>
            <person name="Futaki S."/>
            <person name="Gariboldi M."/>
            <person name="Georgii-Hemming P."/>
            <person name="Gingeras T.R."/>
            <person name="Gojobori T."/>
            <person name="Green R.E."/>
            <person name="Gustincich S."/>
            <person name="Harbers M."/>
            <person name="Hayashi Y."/>
            <person name="Hensch T.K."/>
            <person name="Hirokawa N."/>
            <person name="Hill D."/>
            <person name="Huminiecki L."/>
            <person name="Iacono M."/>
            <person name="Ikeo K."/>
            <person name="Iwama A."/>
            <person name="Ishikawa T."/>
            <person name="Jakt M."/>
            <person name="Kanapin A."/>
            <person name="Katoh M."/>
            <person name="Kawasawa Y."/>
            <person name="Kelso J."/>
            <person name="Kitamura H."/>
            <person name="Kitano H."/>
            <person name="Kollias G."/>
            <person name="Krishnan S.P."/>
            <person name="Kruger A."/>
            <person name="Kummerfeld S.K."/>
            <person name="Kurochkin I.V."/>
            <person name="Lareau L.F."/>
            <person name="Lazarevic D."/>
            <person name="Lipovich L."/>
            <person name="Liu J."/>
            <person name="Liuni S."/>
            <person name="McWilliam S."/>
            <person name="Madan Babu M."/>
            <person name="Madera M."/>
            <person name="Marchionni L."/>
            <person name="Matsuda H."/>
            <person name="Matsuzawa S."/>
            <person name="Miki H."/>
            <person name="Mignone F."/>
            <person name="Miyake S."/>
            <person name="Morris K."/>
            <person name="Mottagui-Tabar S."/>
            <person name="Mulder N."/>
            <person name="Nakano N."/>
            <person name="Nakauchi H."/>
            <person name="Ng P."/>
            <person name="Nilsson R."/>
            <person name="Nishiguchi S."/>
            <person name="Nishikawa S."/>
            <person name="Nori F."/>
            <person name="Ohara O."/>
            <person name="Okazaki Y."/>
            <person name="Orlando V."/>
            <person name="Pang K.C."/>
            <person name="Pavan W.J."/>
            <person name="Pavesi G."/>
            <person name="Pesole G."/>
            <person name="Petrovsky N."/>
            <person name="Piazza S."/>
            <person name="Reed J."/>
            <person name="Reid J.F."/>
            <person name="Ring B.Z."/>
            <person name="Ringwald M."/>
            <person name="Rost B."/>
            <person name="Ruan Y."/>
            <person name="Salzberg S.L."/>
            <person name="Sandelin A."/>
            <person name="Schneider C."/>
            <person name="Schoenbach C."/>
            <person name="Sekiguchi K."/>
            <person name="Semple C.A."/>
            <person name="Seno S."/>
            <person name="Sessa L."/>
            <person name="Sheng Y."/>
            <person name="Shibata Y."/>
            <person name="Shimada H."/>
            <person name="Shimada K."/>
            <person name="Silva D."/>
            <person name="Sinclair B."/>
            <person name="Sperling S."/>
            <person name="Stupka E."/>
            <person name="Sugiura K."/>
            <person name="Sultana R."/>
            <person name="Takenaka Y."/>
            <person name="Taki K."/>
            <person name="Tammoja K."/>
            <person name="Tan S.L."/>
            <person name="Tang S."/>
            <person name="Taylor M.S."/>
            <person name="Tegner J."/>
            <person name="Teichmann S.A."/>
            <person name="Ueda H.R."/>
            <person name="van Nimwegen E."/>
            <person name="Verardo R."/>
            <person name="Wei C.L."/>
            <person name="Yagi K."/>
            <person name="Yamanishi H."/>
            <person name="Zabarovsky E."/>
            <person name="Zhu S."/>
            <person name="Zimmer A."/>
            <person name="Hide W."/>
            <person name="Bult C."/>
            <person name="Grimmond S.M."/>
            <person name="Teasdale R.D."/>
            <person name="Liu E.T."/>
            <person name="Brusic V."/>
            <person name="Quackenbush J."/>
            <person name="Wahlestedt C."/>
            <person name="Mattick J.S."/>
            <person name="Hume D.A."/>
            <person name="Kai C."/>
            <person name="Sasaki D."/>
            <person name="Tomaru Y."/>
            <person name="Fukuda S."/>
            <person name="Kanamori-Katayama M."/>
            <person name="Suzuki M."/>
            <person name="Aoki J."/>
            <person name="Arakawa T."/>
            <person name="Iida J."/>
            <person name="Imamura K."/>
            <person name="Itoh M."/>
            <person name="Kato T."/>
            <person name="Kawaji H."/>
            <person name="Kawagashira N."/>
            <person name="Kawashima T."/>
            <person name="Kojima M."/>
            <person name="Kondo S."/>
            <person name="Konno H."/>
            <person name="Nakano K."/>
            <person name="Ninomiya N."/>
            <person name="Nishio T."/>
            <person name="Okada M."/>
            <person name="Plessy C."/>
            <person name="Shibata K."/>
            <person name="Shiraki T."/>
            <person name="Suzuki S."/>
            <person name="Tagami M."/>
            <person name="Waki K."/>
            <person name="Watahiki A."/>
            <person name="Okamura-Oho Y."/>
            <person name="Suzuki H."/>
            <person name="Kawai J."/>
            <person name="Hayashizaki Y."/>
        </authorList>
    </citation>
    <scope>NUCLEOTIDE SEQUENCE [LARGE SCALE MRNA]</scope>
    <source>
        <strain>C57BL/6J</strain>
        <tissue>Embryo</tissue>
    </source>
</reference>
<reference key="2">
    <citation type="journal article" date="2004" name="Genome Res.">
        <title>The status, quality, and expansion of the NIH full-length cDNA project: the Mammalian Gene Collection (MGC).</title>
        <authorList>
            <consortium name="The MGC Project Team"/>
        </authorList>
    </citation>
    <scope>NUCLEOTIDE SEQUENCE [LARGE SCALE MRNA]</scope>
    <source>
        <tissue>Colon</tissue>
    </source>
</reference>
<reference key="3">
    <citation type="journal article" date="2007" name="Proc. Natl. Acad. Sci. U.S.A.">
        <title>Large-scale phosphorylation analysis of mouse liver.</title>
        <authorList>
            <person name="Villen J."/>
            <person name="Beausoleil S.A."/>
            <person name="Gerber S.A."/>
            <person name="Gygi S.P."/>
        </authorList>
    </citation>
    <scope>IDENTIFICATION BY MASS SPECTROMETRY [LARGE SCALE ANALYSIS]</scope>
    <source>
        <tissue>Liver</tissue>
    </source>
</reference>
<reference key="4">
    <citation type="journal article" date="2010" name="Cell">
        <title>A tissue-specific atlas of mouse protein phosphorylation and expression.</title>
        <authorList>
            <person name="Huttlin E.L."/>
            <person name="Jedrychowski M.P."/>
            <person name="Elias J.E."/>
            <person name="Goswami T."/>
            <person name="Rad R."/>
            <person name="Beausoleil S.A."/>
            <person name="Villen J."/>
            <person name="Haas W."/>
            <person name="Sowa M.E."/>
            <person name="Gygi S.P."/>
        </authorList>
    </citation>
    <scope>PHOSPHORYLATION [LARGE SCALE ANALYSIS] AT SER-215</scope>
    <scope>IDENTIFICATION BY MASS SPECTROMETRY [LARGE SCALE ANALYSIS]</scope>
    <source>
        <tissue>Brain</tissue>
        <tissue>Brown adipose tissue</tissue>
        <tissue>Heart</tissue>
        <tissue>Kidney</tissue>
        <tissue>Liver</tissue>
        <tissue>Lung</tissue>
        <tissue>Pancreas</tissue>
        <tissue>Spleen</tissue>
        <tissue>Testis</tissue>
    </source>
</reference>
<gene>
    <name type="primary">Prpsap1</name>
</gene>
<organism>
    <name type="scientific">Mus musculus</name>
    <name type="common">Mouse</name>
    <dbReference type="NCBI Taxonomy" id="10090"/>
    <lineage>
        <taxon>Eukaryota</taxon>
        <taxon>Metazoa</taxon>
        <taxon>Chordata</taxon>
        <taxon>Craniata</taxon>
        <taxon>Vertebrata</taxon>
        <taxon>Euteleostomi</taxon>
        <taxon>Mammalia</taxon>
        <taxon>Eutheria</taxon>
        <taxon>Euarchontoglires</taxon>
        <taxon>Glires</taxon>
        <taxon>Rodentia</taxon>
        <taxon>Myomorpha</taxon>
        <taxon>Muroidea</taxon>
        <taxon>Muridae</taxon>
        <taxon>Murinae</taxon>
        <taxon>Mus</taxon>
        <taxon>Mus</taxon>
    </lineage>
</organism>
<evidence type="ECO:0000250" key="1"/>
<evidence type="ECO:0000250" key="2">
    <source>
        <dbReference type="UniProtKB" id="Q14558"/>
    </source>
</evidence>
<evidence type="ECO:0000305" key="3"/>
<evidence type="ECO:0007744" key="4">
    <source>
    </source>
</evidence>
<keyword id="KW-0007">Acetylation</keyword>
<keyword id="KW-0545">Nucleotide biosynthesis</keyword>
<keyword id="KW-0597">Phosphoprotein</keyword>
<keyword id="KW-1185">Reference proteome</keyword>
<protein>
    <recommendedName>
        <fullName>Phosphoribosyl pyrophosphate synthase-associated protein 1</fullName>
        <shortName>PRPP synthase-associated protein 1</shortName>
    </recommendedName>
    <alternativeName>
        <fullName>39 kDa phosphoribosypyrophosphate synthase-associated protein</fullName>
        <shortName>PAP39</shortName>
    </alternativeName>
</protein>
<sequence>MNAARTGYRVFSANSTAACTELAKRITERLGAELGKSVVYQETNGETRVEIKESVRGQDIFIIQTIPRDVNTAVMELLIMAYALKTACARNIIGVIPYFPYSKQSKMRKRGSIVCKLLASMLAKAGLTHIITMDLHQKEIQGFFSFPVDNLRASPFLLQYIQEEIPNYRNAVIVAKSPDAAKRAQSYAERLRLGLAVIHGEAQCTELDMDDGRHSPPMVKNATVHPGLELPLMMAKEKPPITVVGDVGGRIAIIVDDIIDDVESFVAAAEILKERGAYKIYVMATHGILSAEAPRLIEESPIDEVVVTNTVPHELQKLQCPKIKTVDISLILSEAIRRIHNGESMAYLFRNITVDD</sequence>